<reference key="1">
    <citation type="journal article" date="2000" name="Proc. Natl. Acad. Sci. U.S.A.">
        <title>Do lampreys have lymphocytes? The Spi evidence.</title>
        <authorList>
            <person name="Shintani S."/>
            <person name="Terzic J."/>
            <person name="Sato A."/>
            <person name="Saraga-Babic M."/>
            <person name="O'hUigin C."/>
            <person name="Tichy H."/>
            <person name="Klein J."/>
        </authorList>
    </citation>
    <scope>NUCLEOTIDE SEQUENCE [MRNA]</scope>
</reference>
<sequence length="265" mass="29313">MLTLEASQLDGPHPSYMFSDSSFYDLDSCKPLPTFPHCLMEAEPPTDPCAGWLELAEPGYEPFDSGQLAPLHTVTVPYGHGPYPPAPSDAIYSLEGPLPAPSHCPVLPEEYGAQPYTLYSPCPLPSTPLSEDDDFPTDAPALEVSDSDSDENLSPGGSLDLDSGSRRKLRLYQFLLGLLQRGDMQECVWWVEHDSGVFQFSSKHKEALAHRWGQQKGNRKAMTYQKMARALRNYGKTGEIRKVKKKLTYQFGHKLLGLSGPRAPS</sequence>
<feature type="chain" id="PRO_0000204139" description="Transcription factor Spi-B-like">
    <location>
        <begin position="1"/>
        <end position="265"/>
    </location>
</feature>
<feature type="DNA-binding region" description="ETS" evidence="2">
    <location>
        <begin position="169"/>
        <end position="252"/>
    </location>
</feature>
<feature type="region of interest" description="TAD1 (Acidic)">
    <location>
        <begin position="1"/>
        <end position="31"/>
    </location>
</feature>
<feature type="region of interest" description="TAD2">
    <location>
        <begin position="42"/>
        <end position="63"/>
    </location>
</feature>
<feature type="region of interest" description="Disordered" evidence="3">
    <location>
        <begin position="127"/>
        <end position="160"/>
    </location>
</feature>
<dbReference type="EMBL" id="AF247364">
    <property type="protein sequence ID" value="AAF78906.1"/>
    <property type="molecule type" value="mRNA"/>
</dbReference>
<dbReference type="SMR" id="Q9I8M6"/>
<dbReference type="GO" id="GO:0005634">
    <property type="term" value="C:nucleus"/>
    <property type="evidence" value="ECO:0007669"/>
    <property type="project" value="UniProtKB-SubCell"/>
</dbReference>
<dbReference type="GO" id="GO:0000981">
    <property type="term" value="F:DNA-binding transcription factor activity, RNA polymerase II-specific"/>
    <property type="evidence" value="ECO:0007669"/>
    <property type="project" value="TreeGrafter"/>
</dbReference>
<dbReference type="GO" id="GO:0043565">
    <property type="term" value="F:sequence-specific DNA binding"/>
    <property type="evidence" value="ECO:0007669"/>
    <property type="project" value="InterPro"/>
</dbReference>
<dbReference type="GO" id="GO:0030154">
    <property type="term" value="P:cell differentiation"/>
    <property type="evidence" value="ECO:0007669"/>
    <property type="project" value="TreeGrafter"/>
</dbReference>
<dbReference type="FunFam" id="1.10.10.10:FF:000250">
    <property type="entry name" value="transcription factor Spi-B isoform X1"/>
    <property type="match status" value="1"/>
</dbReference>
<dbReference type="Gene3D" id="1.10.10.10">
    <property type="entry name" value="Winged helix-like DNA-binding domain superfamily/Winged helix DNA-binding domain"/>
    <property type="match status" value="1"/>
</dbReference>
<dbReference type="InterPro" id="IPR000418">
    <property type="entry name" value="Ets_dom"/>
</dbReference>
<dbReference type="InterPro" id="IPR046328">
    <property type="entry name" value="ETS_fam"/>
</dbReference>
<dbReference type="InterPro" id="IPR036388">
    <property type="entry name" value="WH-like_DNA-bd_sf"/>
</dbReference>
<dbReference type="InterPro" id="IPR036390">
    <property type="entry name" value="WH_DNA-bd_sf"/>
</dbReference>
<dbReference type="PANTHER" id="PTHR11849">
    <property type="entry name" value="ETS"/>
    <property type="match status" value="1"/>
</dbReference>
<dbReference type="PANTHER" id="PTHR11849:SF174">
    <property type="entry name" value="TRANSCRIPTION FACTOR SPI-B"/>
    <property type="match status" value="1"/>
</dbReference>
<dbReference type="Pfam" id="PF00178">
    <property type="entry name" value="Ets"/>
    <property type="match status" value="1"/>
</dbReference>
<dbReference type="PRINTS" id="PR00454">
    <property type="entry name" value="ETSDOMAIN"/>
</dbReference>
<dbReference type="SMART" id="SM00413">
    <property type="entry name" value="ETS"/>
    <property type="match status" value="1"/>
</dbReference>
<dbReference type="SUPFAM" id="SSF46785">
    <property type="entry name" value="Winged helix' DNA-binding domain"/>
    <property type="match status" value="1"/>
</dbReference>
<dbReference type="PROSITE" id="PS00345">
    <property type="entry name" value="ETS_DOMAIN_1"/>
    <property type="match status" value="1"/>
</dbReference>
<dbReference type="PROSITE" id="PS00346">
    <property type="entry name" value="ETS_DOMAIN_2"/>
    <property type="match status" value="1"/>
</dbReference>
<dbReference type="PROSITE" id="PS50061">
    <property type="entry name" value="ETS_DOMAIN_3"/>
    <property type="match status" value="1"/>
</dbReference>
<name>SPIB_PALPA</name>
<accession>Q9I8M6</accession>
<keyword id="KW-0238">DNA-binding</keyword>
<keyword id="KW-0539">Nucleus</keyword>
<keyword id="KW-0804">Transcription</keyword>
<keyword id="KW-0805">Transcription regulation</keyword>
<protein>
    <recommendedName>
        <fullName>Transcription factor Spi-B-like</fullName>
    </recommendedName>
</protein>
<organism>
    <name type="scientific">Paleosuchus palpebrosus</name>
    <name type="common">Cuvier's smooth-fronted caiman</name>
    <name type="synonym">Dwarf caiman</name>
    <dbReference type="NCBI Taxonomy" id="84099"/>
    <lineage>
        <taxon>Eukaryota</taxon>
        <taxon>Metazoa</taxon>
        <taxon>Chordata</taxon>
        <taxon>Craniata</taxon>
        <taxon>Vertebrata</taxon>
        <taxon>Euteleostomi</taxon>
        <taxon>Archelosauria</taxon>
        <taxon>Archosauria</taxon>
        <taxon>Crocodylia</taxon>
        <taxon>Alligatoridae</taxon>
        <taxon>Caimaninae</taxon>
        <taxon>Paleosuchus</taxon>
    </lineage>
</organism>
<proteinExistence type="evidence at transcript level"/>
<comment type="function">
    <text evidence="1">May act as a sequence specific transcriptional activator.</text>
</comment>
<comment type="subcellular location">
    <subcellularLocation>
        <location evidence="4">Nucleus</location>
    </subcellularLocation>
</comment>
<comment type="similarity">
    <text evidence="4">Belongs to the ETS family.</text>
</comment>
<evidence type="ECO:0000250" key="1"/>
<evidence type="ECO:0000255" key="2">
    <source>
        <dbReference type="PROSITE-ProRule" id="PRU00237"/>
    </source>
</evidence>
<evidence type="ECO:0000256" key="3">
    <source>
        <dbReference type="SAM" id="MobiDB-lite"/>
    </source>
</evidence>
<evidence type="ECO:0000305" key="4"/>